<accession>A5UBU9</accession>
<reference key="1">
    <citation type="journal article" date="2007" name="Genome Biol.">
        <title>Characterization and modeling of the Haemophilus influenzae core and supragenomes based on the complete genomic sequences of Rd and 12 clinical nontypeable strains.</title>
        <authorList>
            <person name="Hogg J.S."/>
            <person name="Hu F.Z."/>
            <person name="Janto B."/>
            <person name="Boissy R."/>
            <person name="Hayes J."/>
            <person name="Keefe R."/>
            <person name="Post J.C."/>
            <person name="Ehrlich G.D."/>
        </authorList>
    </citation>
    <scope>NUCLEOTIDE SEQUENCE [LARGE SCALE GENOMIC DNA]</scope>
    <source>
        <strain>PittEE</strain>
    </source>
</reference>
<evidence type="ECO:0000255" key="1">
    <source>
        <dbReference type="HAMAP-Rule" id="MF_01144"/>
    </source>
</evidence>
<protein>
    <recommendedName>
        <fullName evidence="1">UPF0299 membrane protein CGSHiEE_04225</fullName>
    </recommendedName>
</protein>
<gene>
    <name type="ordered locus">CGSHiEE_04225</name>
</gene>
<organism>
    <name type="scientific">Haemophilus influenzae (strain PittEE)</name>
    <dbReference type="NCBI Taxonomy" id="374930"/>
    <lineage>
        <taxon>Bacteria</taxon>
        <taxon>Pseudomonadati</taxon>
        <taxon>Pseudomonadota</taxon>
        <taxon>Gammaproteobacteria</taxon>
        <taxon>Pasteurellales</taxon>
        <taxon>Pasteurellaceae</taxon>
        <taxon>Haemophilus</taxon>
    </lineage>
</organism>
<sequence>MIQKLFLLVRSLVILSIMLSLGNLIAYYIPSGVPGSIWGLLLLFLGLTTRVIHLNWIYLGASLLIRFMAVLFVPVSVGIIKYSDLLIEQINILLVPNIVSTCVTLLVIGFLGHYLYQMQSFTHKRKKVIKRKRKSGKTSQLVC</sequence>
<proteinExistence type="inferred from homology"/>
<keyword id="KW-0997">Cell inner membrane</keyword>
<keyword id="KW-1003">Cell membrane</keyword>
<keyword id="KW-0472">Membrane</keyword>
<keyword id="KW-0812">Transmembrane</keyword>
<keyword id="KW-1133">Transmembrane helix</keyword>
<dbReference type="EMBL" id="CP000671">
    <property type="protein sequence ID" value="ABQ98250.1"/>
    <property type="molecule type" value="Genomic_DNA"/>
</dbReference>
<dbReference type="SMR" id="A5UBU9"/>
<dbReference type="KEGG" id="hip:CGSHiEE_04225"/>
<dbReference type="HOGENOM" id="CLU_113736_1_1_6"/>
<dbReference type="GO" id="GO:0005886">
    <property type="term" value="C:plasma membrane"/>
    <property type="evidence" value="ECO:0007669"/>
    <property type="project" value="UniProtKB-SubCell"/>
</dbReference>
<dbReference type="HAMAP" id="MF_01144">
    <property type="entry name" value="UPF0299"/>
    <property type="match status" value="1"/>
</dbReference>
<dbReference type="InterPro" id="IPR005538">
    <property type="entry name" value="LrgA/CidA"/>
</dbReference>
<dbReference type="InterPro" id="IPR022957">
    <property type="entry name" value="Uncharacterised_UPF0299"/>
</dbReference>
<dbReference type="NCBIfam" id="NF002494">
    <property type="entry name" value="PRK01821.1"/>
    <property type="match status" value="1"/>
</dbReference>
<dbReference type="PANTHER" id="PTHR33931">
    <property type="entry name" value="HOLIN-LIKE PROTEIN CIDA-RELATED"/>
    <property type="match status" value="1"/>
</dbReference>
<dbReference type="PANTHER" id="PTHR33931:SF5">
    <property type="entry name" value="UPF0299 MEMBRANE PROTEIN YOHJ"/>
    <property type="match status" value="1"/>
</dbReference>
<dbReference type="Pfam" id="PF03788">
    <property type="entry name" value="LrgA"/>
    <property type="match status" value="1"/>
</dbReference>
<comment type="subcellular location">
    <subcellularLocation>
        <location evidence="1">Cell inner membrane</location>
        <topology evidence="1">Multi-pass membrane protein</topology>
    </subcellularLocation>
</comment>
<comment type="similarity">
    <text evidence="1">Belongs to the UPF0299 family.</text>
</comment>
<name>Y4225_HAEIE</name>
<feature type="chain" id="PRO_1000065459" description="UPF0299 membrane protein CGSHiEE_04225">
    <location>
        <begin position="1"/>
        <end position="143"/>
    </location>
</feature>
<feature type="transmembrane region" description="Helical" evidence="1">
    <location>
        <begin position="1"/>
        <end position="21"/>
    </location>
</feature>
<feature type="transmembrane region" description="Helical" evidence="1">
    <location>
        <begin position="33"/>
        <end position="52"/>
    </location>
</feature>
<feature type="transmembrane region" description="Helical" evidence="1">
    <location>
        <begin position="60"/>
        <end position="80"/>
    </location>
</feature>
<feature type="transmembrane region" description="Helical" evidence="1">
    <location>
        <begin position="92"/>
        <end position="112"/>
    </location>
</feature>